<dbReference type="EC" id="2.1.2.10" evidence="1"/>
<dbReference type="EMBL" id="CP001098">
    <property type="protein sequence ID" value="ACL71089.1"/>
    <property type="molecule type" value="Genomic_DNA"/>
</dbReference>
<dbReference type="RefSeq" id="WP_015924057.1">
    <property type="nucleotide sequence ID" value="NC_011899.1"/>
</dbReference>
<dbReference type="SMR" id="B8D1D7"/>
<dbReference type="STRING" id="373903.Hore_23440"/>
<dbReference type="KEGG" id="hor:Hore_23440"/>
<dbReference type="eggNOG" id="COG0404">
    <property type="taxonomic scope" value="Bacteria"/>
</dbReference>
<dbReference type="HOGENOM" id="CLU_007884_10_2_9"/>
<dbReference type="OrthoDB" id="9774591at2"/>
<dbReference type="Proteomes" id="UP000000719">
    <property type="component" value="Chromosome"/>
</dbReference>
<dbReference type="GO" id="GO:0005829">
    <property type="term" value="C:cytosol"/>
    <property type="evidence" value="ECO:0007669"/>
    <property type="project" value="TreeGrafter"/>
</dbReference>
<dbReference type="GO" id="GO:0005960">
    <property type="term" value="C:glycine cleavage complex"/>
    <property type="evidence" value="ECO:0007669"/>
    <property type="project" value="InterPro"/>
</dbReference>
<dbReference type="GO" id="GO:0004047">
    <property type="term" value="F:aminomethyltransferase activity"/>
    <property type="evidence" value="ECO:0007669"/>
    <property type="project" value="UniProtKB-UniRule"/>
</dbReference>
<dbReference type="GO" id="GO:0008483">
    <property type="term" value="F:transaminase activity"/>
    <property type="evidence" value="ECO:0007669"/>
    <property type="project" value="UniProtKB-KW"/>
</dbReference>
<dbReference type="GO" id="GO:0019464">
    <property type="term" value="P:glycine decarboxylation via glycine cleavage system"/>
    <property type="evidence" value="ECO:0007669"/>
    <property type="project" value="UniProtKB-UniRule"/>
</dbReference>
<dbReference type="FunFam" id="2.40.30.110:FF:000003">
    <property type="entry name" value="Aminomethyltransferase"/>
    <property type="match status" value="1"/>
</dbReference>
<dbReference type="FunFam" id="3.30.70.1400:FF:000001">
    <property type="entry name" value="Aminomethyltransferase"/>
    <property type="match status" value="1"/>
</dbReference>
<dbReference type="FunFam" id="4.10.1250.10:FF:000001">
    <property type="entry name" value="Aminomethyltransferase"/>
    <property type="match status" value="1"/>
</dbReference>
<dbReference type="Gene3D" id="2.40.30.110">
    <property type="entry name" value="Aminomethyltransferase beta-barrel domains"/>
    <property type="match status" value="1"/>
</dbReference>
<dbReference type="Gene3D" id="3.30.70.1400">
    <property type="entry name" value="Aminomethyltransferase beta-barrel domains"/>
    <property type="match status" value="1"/>
</dbReference>
<dbReference type="Gene3D" id="4.10.1250.10">
    <property type="entry name" value="Aminomethyltransferase fragment"/>
    <property type="match status" value="1"/>
</dbReference>
<dbReference type="Gene3D" id="3.30.1360.120">
    <property type="entry name" value="Probable tRNA modification gtpase trme, domain 1"/>
    <property type="match status" value="1"/>
</dbReference>
<dbReference type="HAMAP" id="MF_00259">
    <property type="entry name" value="GcvT"/>
    <property type="match status" value="1"/>
</dbReference>
<dbReference type="InterPro" id="IPR006223">
    <property type="entry name" value="GCS_T"/>
</dbReference>
<dbReference type="InterPro" id="IPR022903">
    <property type="entry name" value="GCS_T_bac"/>
</dbReference>
<dbReference type="InterPro" id="IPR013977">
    <property type="entry name" value="GCST_C"/>
</dbReference>
<dbReference type="InterPro" id="IPR006222">
    <property type="entry name" value="GCV_T_N"/>
</dbReference>
<dbReference type="InterPro" id="IPR028896">
    <property type="entry name" value="GcvT/YgfZ/DmdA"/>
</dbReference>
<dbReference type="InterPro" id="IPR029043">
    <property type="entry name" value="GcvT/YgfZ_C"/>
</dbReference>
<dbReference type="InterPro" id="IPR027266">
    <property type="entry name" value="TrmE/GcvT_dom1"/>
</dbReference>
<dbReference type="NCBIfam" id="TIGR00528">
    <property type="entry name" value="gcvT"/>
    <property type="match status" value="1"/>
</dbReference>
<dbReference type="NCBIfam" id="NF001567">
    <property type="entry name" value="PRK00389.1"/>
    <property type="match status" value="1"/>
</dbReference>
<dbReference type="PANTHER" id="PTHR43757">
    <property type="entry name" value="AMINOMETHYLTRANSFERASE"/>
    <property type="match status" value="1"/>
</dbReference>
<dbReference type="PANTHER" id="PTHR43757:SF2">
    <property type="entry name" value="AMINOMETHYLTRANSFERASE, MITOCHONDRIAL"/>
    <property type="match status" value="1"/>
</dbReference>
<dbReference type="Pfam" id="PF01571">
    <property type="entry name" value="GCV_T"/>
    <property type="match status" value="1"/>
</dbReference>
<dbReference type="Pfam" id="PF08669">
    <property type="entry name" value="GCV_T_C"/>
    <property type="match status" value="1"/>
</dbReference>
<dbReference type="PIRSF" id="PIRSF006487">
    <property type="entry name" value="GcvT"/>
    <property type="match status" value="1"/>
</dbReference>
<dbReference type="SUPFAM" id="SSF101790">
    <property type="entry name" value="Aminomethyltransferase beta-barrel domain"/>
    <property type="match status" value="1"/>
</dbReference>
<dbReference type="SUPFAM" id="SSF103025">
    <property type="entry name" value="Folate-binding domain"/>
    <property type="match status" value="1"/>
</dbReference>
<sequence length="357" mass="39457">MKKTPLFEIHKELGARLIEFHGWSMPVQYTSIIEEHKAVRNQCGLFDVSHMGEILVEGPGALESLQKIVTNNVARLKKGQVLYTPMCKDDGGIIDDLLVYCLGQDKYLMVVNASNIEKDFNWVRDNSNQRTEVVNESDNYALLALQGPNSKKILEKVSSVNLDSLKFYNFTTGTLKGAEVLISRTGYTGELGYELYLSPDKAVEVWQALMEAGSDLGLIPAGLGARDTLRLEKGYCLYGNDIDENTHPLEAGLGWTVKFDKASFIGKRALLKYKEEGLSRKLVGFKLKGRGIPRHGYPIKDNGDQIGVVTSGSMSPTLSEGIGMGYVRYDKATPGESITIVVRNRAITGEVVKLPFI</sequence>
<protein>
    <recommendedName>
        <fullName evidence="1">Aminomethyltransferase</fullName>
        <ecNumber evidence="1">2.1.2.10</ecNumber>
    </recommendedName>
    <alternativeName>
        <fullName evidence="1">Glycine cleavage system T protein</fullName>
    </alternativeName>
</protein>
<comment type="function">
    <text evidence="1">The glycine cleavage system catalyzes the degradation of glycine.</text>
</comment>
<comment type="catalytic activity">
    <reaction evidence="1">
        <text>N(6)-[(R)-S(8)-aminomethyldihydrolipoyl]-L-lysyl-[protein] + (6S)-5,6,7,8-tetrahydrofolate = N(6)-[(R)-dihydrolipoyl]-L-lysyl-[protein] + (6R)-5,10-methylene-5,6,7,8-tetrahydrofolate + NH4(+)</text>
        <dbReference type="Rhea" id="RHEA:16945"/>
        <dbReference type="Rhea" id="RHEA-COMP:10475"/>
        <dbReference type="Rhea" id="RHEA-COMP:10492"/>
        <dbReference type="ChEBI" id="CHEBI:15636"/>
        <dbReference type="ChEBI" id="CHEBI:28938"/>
        <dbReference type="ChEBI" id="CHEBI:57453"/>
        <dbReference type="ChEBI" id="CHEBI:83100"/>
        <dbReference type="ChEBI" id="CHEBI:83143"/>
        <dbReference type="EC" id="2.1.2.10"/>
    </reaction>
</comment>
<comment type="subunit">
    <text evidence="1">The glycine cleavage system is composed of four proteins: P, T, L and H.</text>
</comment>
<comment type="similarity">
    <text evidence="1">Belongs to the GcvT family.</text>
</comment>
<feature type="chain" id="PRO_1000125640" description="Aminomethyltransferase">
    <location>
        <begin position="1"/>
        <end position="357"/>
    </location>
</feature>
<keyword id="KW-0032">Aminotransferase</keyword>
<keyword id="KW-1185">Reference proteome</keyword>
<keyword id="KW-0808">Transferase</keyword>
<proteinExistence type="inferred from homology"/>
<reference key="1">
    <citation type="journal article" date="2009" name="PLoS ONE">
        <title>Genome analysis of the anaerobic thermohalophilic bacterium Halothermothrix orenii.</title>
        <authorList>
            <person name="Mavromatis K."/>
            <person name="Ivanova N."/>
            <person name="Anderson I."/>
            <person name="Lykidis A."/>
            <person name="Hooper S.D."/>
            <person name="Sun H."/>
            <person name="Kunin V."/>
            <person name="Lapidus A."/>
            <person name="Hugenholtz P."/>
            <person name="Patel B."/>
            <person name="Kyrpides N.C."/>
        </authorList>
    </citation>
    <scope>NUCLEOTIDE SEQUENCE [LARGE SCALE GENOMIC DNA]</scope>
    <source>
        <strain>H 168 / OCM 544 / DSM 9562</strain>
    </source>
</reference>
<evidence type="ECO:0000255" key="1">
    <source>
        <dbReference type="HAMAP-Rule" id="MF_00259"/>
    </source>
</evidence>
<accession>B8D1D7</accession>
<organism>
    <name type="scientific">Halothermothrix orenii (strain H 168 / OCM 544 / DSM 9562)</name>
    <dbReference type="NCBI Taxonomy" id="373903"/>
    <lineage>
        <taxon>Bacteria</taxon>
        <taxon>Bacillati</taxon>
        <taxon>Bacillota</taxon>
        <taxon>Clostridia</taxon>
        <taxon>Halanaerobiales</taxon>
        <taxon>Halothermotrichaceae</taxon>
        <taxon>Halothermothrix</taxon>
    </lineage>
</organism>
<gene>
    <name evidence="1" type="primary">gcvT</name>
    <name type="ordered locus">Hore_23440</name>
</gene>
<name>GCST_HALOH</name>